<reference key="1">
    <citation type="journal article" date="2007" name="PLoS ONE">
        <title>Molecular correlates of host specialization in Staphylococcus aureus.</title>
        <authorList>
            <person name="Herron-Olson L."/>
            <person name="Fitzgerald J.R."/>
            <person name="Musser J.M."/>
            <person name="Kapur V."/>
        </authorList>
    </citation>
    <scope>NUCLEOTIDE SEQUENCE [LARGE SCALE GENOMIC DNA]</scope>
    <source>
        <strain>bovine RF122 / ET3-1</strain>
    </source>
</reference>
<dbReference type="EC" id="2.5.1.19" evidence="1"/>
<dbReference type="EMBL" id="AJ938182">
    <property type="protein sequence ID" value="CAI81017.1"/>
    <property type="molecule type" value="Genomic_DNA"/>
</dbReference>
<dbReference type="RefSeq" id="WP_000245905.1">
    <property type="nucleotide sequence ID" value="NC_007622.1"/>
</dbReference>
<dbReference type="SMR" id="Q2YY90"/>
<dbReference type="KEGG" id="sab:SAB1328c"/>
<dbReference type="HOGENOM" id="CLU_024321_0_1_9"/>
<dbReference type="UniPathway" id="UPA00053">
    <property type="reaction ID" value="UER00089"/>
</dbReference>
<dbReference type="GO" id="GO:0005737">
    <property type="term" value="C:cytoplasm"/>
    <property type="evidence" value="ECO:0007669"/>
    <property type="project" value="UniProtKB-SubCell"/>
</dbReference>
<dbReference type="GO" id="GO:0003866">
    <property type="term" value="F:3-phosphoshikimate 1-carboxyvinyltransferase activity"/>
    <property type="evidence" value="ECO:0007669"/>
    <property type="project" value="UniProtKB-UniRule"/>
</dbReference>
<dbReference type="GO" id="GO:0008652">
    <property type="term" value="P:amino acid biosynthetic process"/>
    <property type="evidence" value="ECO:0007669"/>
    <property type="project" value="UniProtKB-KW"/>
</dbReference>
<dbReference type="GO" id="GO:0009073">
    <property type="term" value="P:aromatic amino acid family biosynthetic process"/>
    <property type="evidence" value="ECO:0007669"/>
    <property type="project" value="UniProtKB-KW"/>
</dbReference>
<dbReference type="GO" id="GO:0009423">
    <property type="term" value="P:chorismate biosynthetic process"/>
    <property type="evidence" value="ECO:0007669"/>
    <property type="project" value="UniProtKB-UniRule"/>
</dbReference>
<dbReference type="CDD" id="cd01556">
    <property type="entry name" value="EPSP_synthase"/>
    <property type="match status" value="1"/>
</dbReference>
<dbReference type="FunFam" id="3.65.10.10:FF:000005">
    <property type="entry name" value="3-phosphoshikimate 1-carboxyvinyltransferase"/>
    <property type="match status" value="1"/>
</dbReference>
<dbReference type="FunFam" id="3.65.10.10:FF:000006">
    <property type="entry name" value="3-phosphoshikimate 1-carboxyvinyltransferase"/>
    <property type="match status" value="1"/>
</dbReference>
<dbReference type="Gene3D" id="3.65.10.10">
    <property type="entry name" value="Enolpyruvate transferase domain"/>
    <property type="match status" value="2"/>
</dbReference>
<dbReference type="HAMAP" id="MF_00210">
    <property type="entry name" value="EPSP_synth"/>
    <property type="match status" value="1"/>
</dbReference>
<dbReference type="InterPro" id="IPR001986">
    <property type="entry name" value="Enolpyruvate_Tfrase_dom"/>
</dbReference>
<dbReference type="InterPro" id="IPR036968">
    <property type="entry name" value="Enolpyruvate_Tfrase_sf"/>
</dbReference>
<dbReference type="InterPro" id="IPR006264">
    <property type="entry name" value="EPSP_synthase"/>
</dbReference>
<dbReference type="InterPro" id="IPR023193">
    <property type="entry name" value="EPSP_synthase_CS"/>
</dbReference>
<dbReference type="InterPro" id="IPR013792">
    <property type="entry name" value="RNA3'P_cycl/enolpyr_Trfase_a/b"/>
</dbReference>
<dbReference type="NCBIfam" id="TIGR01356">
    <property type="entry name" value="aroA"/>
    <property type="match status" value="1"/>
</dbReference>
<dbReference type="PANTHER" id="PTHR21090">
    <property type="entry name" value="AROM/DEHYDROQUINATE SYNTHASE"/>
    <property type="match status" value="1"/>
</dbReference>
<dbReference type="PANTHER" id="PTHR21090:SF5">
    <property type="entry name" value="PENTAFUNCTIONAL AROM POLYPEPTIDE"/>
    <property type="match status" value="1"/>
</dbReference>
<dbReference type="Pfam" id="PF00275">
    <property type="entry name" value="EPSP_synthase"/>
    <property type="match status" value="1"/>
</dbReference>
<dbReference type="PIRSF" id="PIRSF000505">
    <property type="entry name" value="EPSPS"/>
    <property type="match status" value="1"/>
</dbReference>
<dbReference type="SUPFAM" id="SSF55205">
    <property type="entry name" value="EPT/RTPC-like"/>
    <property type="match status" value="1"/>
</dbReference>
<dbReference type="PROSITE" id="PS00104">
    <property type="entry name" value="EPSP_SYNTHASE_1"/>
    <property type="match status" value="1"/>
</dbReference>
<dbReference type="PROSITE" id="PS00885">
    <property type="entry name" value="EPSP_SYNTHASE_2"/>
    <property type="match status" value="1"/>
</dbReference>
<sequence length="432" mass="46965">MVNEQIIDISGPLKGEIEVPGDKSMTHRAIMLASLAEGVSTIYKPLLGEDCRRTMDIFRLLGVEIKEDDEKLVVTSPGYQSFNTPHQVLYTGNSGTTTRLLAGLLSGLGIESVLSGDVSIGKRPMDRVLRPLKSMNANIEGIEDNYTPLIIKPSVIKGINYKMEVASAQVKSAILFASLFSKEATIIKELDVSRNHTETMFRHFNIPIEAEGLSITTTPEAIRYIKPADFHVPGDISSAAFFIVAALITPGSDVTIHNVGINPTRSGIIDIVEKMGGNIQLFNQTTGAEPTASIRIQYTPMLQPITIEGELVPKAIDELPVIALLCTQAVGTSTIKDAEELKVKETNRIDTTADMLNLLGFELQPTNDGLIIHPSEFKTNATVDSLTDHRIGMMLAVASLLSSEPVKIKQFDAVNVSFPGFLPKLKLLENEG</sequence>
<organism>
    <name type="scientific">Staphylococcus aureus (strain bovine RF122 / ET3-1)</name>
    <dbReference type="NCBI Taxonomy" id="273036"/>
    <lineage>
        <taxon>Bacteria</taxon>
        <taxon>Bacillati</taxon>
        <taxon>Bacillota</taxon>
        <taxon>Bacilli</taxon>
        <taxon>Bacillales</taxon>
        <taxon>Staphylococcaceae</taxon>
        <taxon>Staphylococcus</taxon>
    </lineage>
</organism>
<comment type="function">
    <text evidence="1">Catalyzes the transfer of the enolpyruvyl moiety of phosphoenolpyruvate (PEP) to the 5-hydroxyl of shikimate-3-phosphate (S3P) to produce enolpyruvyl shikimate-3-phosphate and inorganic phosphate.</text>
</comment>
<comment type="catalytic activity">
    <reaction evidence="1">
        <text>3-phosphoshikimate + phosphoenolpyruvate = 5-O-(1-carboxyvinyl)-3-phosphoshikimate + phosphate</text>
        <dbReference type="Rhea" id="RHEA:21256"/>
        <dbReference type="ChEBI" id="CHEBI:43474"/>
        <dbReference type="ChEBI" id="CHEBI:57701"/>
        <dbReference type="ChEBI" id="CHEBI:58702"/>
        <dbReference type="ChEBI" id="CHEBI:145989"/>
        <dbReference type="EC" id="2.5.1.19"/>
    </reaction>
    <physiologicalReaction direction="left-to-right" evidence="1">
        <dbReference type="Rhea" id="RHEA:21257"/>
    </physiologicalReaction>
</comment>
<comment type="pathway">
    <text evidence="1">Metabolic intermediate biosynthesis; chorismate biosynthesis; chorismate from D-erythrose 4-phosphate and phosphoenolpyruvate: step 6/7.</text>
</comment>
<comment type="subunit">
    <text evidence="1">Monomer.</text>
</comment>
<comment type="subcellular location">
    <subcellularLocation>
        <location evidence="1">Cytoplasm</location>
    </subcellularLocation>
</comment>
<comment type="similarity">
    <text evidence="1">Belongs to the EPSP synthase family.</text>
</comment>
<evidence type="ECO:0000255" key="1">
    <source>
        <dbReference type="HAMAP-Rule" id="MF_00210"/>
    </source>
</evidence>
<accession>Q2YY90</accession>
<feature type="chain" id="PRO_1000012486" description="3-phosphoshikimate 1-carboxyvinyltransferase">
    <location>
        <begin position="1"/>
        <end position="432"/>
    </location>
</feature>
<feature type="active site" description="Proton acceptor" evidence="1">
    <location>
        <position position="317"/>
    </location>
</feature>
<feature type="binding site" evidence="1">
    <location>
        <position position="23"/>
    </location>
    <ligand>
        <name>3-phosphoshikimate</name>
        <dbReference type="ChEBI" id="CHEBI:145989"/>
    </ligand>
</feature>
<feature type="binding site" evidence="1">
    <location>
        <position position="23"/>
    </location>
    <ligand>
        <name>phosphoenolpyruvate</name>
        <dbReference type="ChEBI" id="CHEBI:58702"/>
    </ligand>
</feature>
<feature type="binding site" evidence="1">
    <location>
        <position position="24"/>
    </location>
    <ligand>
        <name>3-phosphoshikimate</name>
        <dbReference type="ChEBI" id="CHEBI:145989"/>
    </ligand>
</feature>
<feature type="binding site" evidence="1">
    <location>
        <position position="28"/>
    </location>
    <ligand>
        <name>3-phosphoshikimate</name>
        <dbReference type="ChEBI" id="CHEBI:145989"/>
    </ligand>
</feature>
<feature type="binding site" evidence="1">
    <location>
        <position position="95"/>
    </location>
    <ligand>
        <name>phosphoenolpyruvate</name>
        <dbReference type="ChEBI" id="CHEBI:58702"/>
    </ligand>
</feature>
<feature type="binding site" evidence="1">
    <location>
        <position position="123"/>
    </location>
    <ligand>
        <name>phosphoenolpyruvate</name>
        <dbReference type="ChEBI" id="CHEBI:58702"/>
    </ligand>
</feature>
<feature type="binding site" evidence="1">
    <location>
        <position position="167"/>
    </location>
    <ligand>
        <name>3-phosphoshikimate</name>
        <dbReference type="ChEBI" id="CHEBI:145989"/>
    </ligand>
</feature>
<feature type="binding site" evidence="1">
    <location>
        <position position="169"/>
    </location>
    <ligand>
        <name>3-phosphoshikimate</name>
        <dbReference type="ChEBI" id="CHEBI:145989"/>
    </ligand>
</feature>
<feature type="binding site" evidence="1">
    <location>
        <position position="169"/>
    </location>
    <ligand>
        <name>phosphoenolpyruvate</name>
        <dbReference type="ChEBI" id="CHEBI:58702"/>
    </ligand>
</feature>
<feature type="binding site" evidence="1">
    <location>
        <position position="317"/>
    </location>
    <ligand>
        <name>3-phosphoshikimate</name>
        <dbReference type="ChEBI" id="CHEBI:145989"/>
    </ligand>
</feature>
<feature type="binding site" evidence="1">
    <location>
        <position position="344"/>
    </location>
    <ligand>
        <name>3-phosphoshikimate</name>
        <dbReference type="ChEBI" id="CHEBI:145989"/>
    </ligand>
</feature>
<feature type="binding site" evidence="1">
    <location>
        <position position="348"/>
    </location>
    <ligand>
        <name>phosphoenolpyruvate</name>
        <dbReference type="ChEBI" id="CHEBI:58702"/>
    </ligand>
</feature>
<feature type="binding site" evidence="1">
    <location>
        <position position="390"/>
    </location>
    <ligand>
        <name>phosphoenolpyruvate</name>
        <dbReference type="ChEBI" id="CHEBI:58702"/>
    </ligand>
</feature>
<gene>
    <name evidence="1" type="primary">aroA</name>
    <name type="ordered locus">SAB1328c</name>
</gene>
<protein>
    <recommendedName>
        <fullName evidence="1">3-phosphoshikimate 1-carboxyvinyltransferase</fullName>
        <ecNumber evidence="1">2.5.1.19</ecNumber>
    </recommendedName>
    <alternativeName>
        <fullName evidence="1">5-enolpyruvylshikimate-3-phosphate synthase</fullName>
        <shortName evidence="1">EPSP synthase</shortName>
        <shortName evidence="1">EPSPS</shortName>
    </alternativeName>
</protein>
<keyword id="KW-0028">Amino-acid biosynthesis</keyword>
<keyword id="KW-0057">Aromatic amino acid biosynthesis</keyword>
<keyword id="KW-0963">Cytoplasm</keyword>
<keyword id="KW-0808">Transferase</keyword>
<name>AROA_STAAB</name>
<proteinExistence type="inferred from homology"/>